<comment type="function">
    <text evidence="3">Involved in the biosynthesis of porphyrin-containing compound.</text>
</comment>
<comment type="cofactor">
    <cofactor evidence="4 5">
        <name>[4Fe-4S] cluster</name>
        <dbReference type="ChEBI" id="CHEBI:49883"/>
    </cofactor>
    <text evidence="4 5">Binds 1 [4Fe-4S] cluster. The cluster is coordinated with 3 cysteines and an exchangeable S-adenosyl-L-methionine.</text>
</comment>
<comment type="pathway">
    <text>Porphyrin-containing compound metabolism; protoporphyrin-IX biosynthesis.</text>
</comment>
<comment type="induction">
    <text evidence="3">Induced under anaerobic conditions and by hydrogen peroxide stress. It is also dependent on induction by ResDE, Fnr and ArfM.</text>
</comment>
<comment type="disruption phenotype">
    <text evidence="3">Cells lacking this gene accumulate coproporphyrin-III only under anaerobic conditions, however no obvious respiratory growth phenotype is observed under anaerobic conditions. The hemN hemZ double mutant do not abolish aerobic and anaerobic respiratory growth, however a reduction of growth is observed.</text>
</comment>
<comment type="miscellaneous">
    <text evidence="6">HemZ is able to complement a S.typhimurium hemF hemN double mutant under aerobic and anaerobic conditions, however under anaerobic growth conditions, the double mutant complemented with hemZ grows significantly faster.</text>
</comment>
<comment type="similarity">
    <text evidence="5">Belongs to the anaerobic coproporphyrinogen-III oxidase family. HemZ subfamily.</text>
</comment>
<comment type="caution">
    <text evidence="5">Although the enzyme shows to be able to complement hemF hemN double mutant and to accumulate coproporphyrinogen-III when the gene is disrupted, no oxygen-independent coproporphyrinogen-III oxidase activity has been shown. The exact role of this protein is still unknown.</text>
</comment>
<comment type="sequence caution" evidence="5">
    <conflict type="frameshift">
        <sequence resource="EMBL-CDS" id="CAA74441"/>
    </conflict>
</comment>
<comment type="sequence caution" evidence="5">
    <conflict type="frameshift">
        <sequence resource="EMBL-CDS" id="CAA74454"/>
    </conflict>
</comment>
<feature type="chain" id="PRO_0000109955" description="Oxygen-independent coproporphyrinogen-III oxidase-like protein HemZ">
    <location>
        <begin position="1"/>
        <end position="501"/>
    </location>
</feature>
<feature type="domain" description="Radical SAM core" evidence="2">
    <location>
        <begin position="163"/>
        <end position="405"/>
    </location>
</feature>
<feature type="binding site" evidence="1">
    <location>
        <position position="174"/>
    </location>
    <ligand>
        <name>S-adenosyl-L-methionine</name>
        <dbReference type="ChEBI" id="CHEBI:59789"/>
        <label>1</label>
    </ligand>
</feature>
<feature type="binding site" evidence="1">
    <location>
        <position position="180"/>
    </location>
    <ligand>
        <name>[4Fe-4S] cluster</name>
        <dbReference type="ChEBI" id="CHEBI:49883"/>
        <note>4Fe-4S-S-AdoMet</note>
    </ligand>
</feature>
<feature type="binding site" evidence="1">
    <location>
        <position position="184"/>
    </location>
    <ligand>
        <name>[4Fe-4S] cluster</name>
        <dbReference type="ChEBI" id="CHEBI:49883"/>
        <note>4Fe-4S-S-AdoMet</note>
    </ligand>
</feature>
<feature type="binding site" evidence="1">
    <location>
        <position position="186"/>
    </location>
    <ligand>
        <name>S-adenosyl-L-methionine</name>
        <dbReference type="ChEBI" id="CHEBI:59789"/>
        <label>2</label>
    </ligand>
</feature>
<feature type="binding site" evidence="1">
    <location>
        <position position="187"/>
    </location>
    <ligand>
        <name>[4Fe-4S] cluster</name>
        <dbReference type="ChEBI" id="CHEBI:49883"/>
        <note>4Fe-4S-S-AdoMet</note>
    </ligand>
</feature>
<feature type="binding site" evidence="1">
    <location>
        <position position="233"/>
    </location>
    <ligand>
        <name>S-adenosyl-L-methionine</name>
        <dbReference type="ChEBI" id="CHEBI:59789"/>
        <label>1</label>
    </ligand>
</feature>
<feature type="binding site" evidence="1">
    <location>
        <begin position="234"/>
        <end position="235"/>
    </location>
    <ligand>
        <name>S-adenosyl-L-methionine</name>
        <dbReference type="ChEBI" id="CHEBI:59789"/>
        <label>2</label>
    </ligand>
</feature>
<feature type="binding site" evidence="1">
    <location>
        <position position="267"/>
    </location>
    <ligand>
        <name>S-adenosyl-L-methionine</name>
        <dbReference type="ChEBI" id="CHEBI:59789"/>
        <label>1</label>
    </ligand>
</feature>
<feature type="binding site" evidence="1">
    <location>
        <position position="295"/>
    </location>
    <ligand>
        <name>S-adenosyl-L-methionine</name>
        <dbReference type="ChEBI" id="CHEBI:59789"/>
        <label>2</label>
    </ligand>
</feature>
<feature type="binding site" evidence="1">
    <location>
        <position position="307"/>
    </location>
    <ligand>
        <name>S-adenosyl-L-methionine</name>
        <dbReference type="ChEBI" id="CHEBI:59789"/>
        <label>2</label>
    </ligand>
</feature>
<feature type="binding site" evidence="1">
    <location>
        <position position="332"/>
    </location>
    <ligand>
        <name>S-adenosyl-L-methionine</name>
        <dbReference type="ChEBI" id="CHEBI:59789"/>
        <label>2</label>
    </ligand>
</feature>
<reference key="1">
    <citation type="journal article" date="1998" name="Microbiology">
        <title>The 172 kb prkA-addAB region from 83 degrees to 97 degrees of the Bacillus subtilis chromosome contains several dysfunctional genes, the glyB marker, many genes encoding transporter proteins, and the ubiquitous hit gene.</title>
        <authorList>
            <person name="Noback M.A."/>
            <person name="Holsappel S."/>
            <person name="Kiewiet R."/>
            <person name="Terpstra P."/>
            <person name="Wambutt R."/>
            <person name="Wedler H."/>
            <person name="Venema G."/>
            <person name="Bron S."/>
        </authorList>
    </citation>
    <scope>NUCLEOTIDE SEQUENCE [LARGE SCALE GENOMIC DNA]</scope>
    <source>
        <strain>168</strain>
    </source>
</reference>
<reference key="2">
    <citation type="journal article" date="1997" name="Nature">
        <title>The complete genome sequence of the Gram-positive bacterium Bacillus subtilis.</title>
        <authorList>
            <person name="Kunst F."/>
            <person name="Ogasawara N."/>
            <person name="Moszer I."/>
            <person name="Albertini A.M."/>
            <person name="Alloni G."/>
            <person name="Azevedo V."/>
            <person name="Bertero M.G."/>
            <person name="Bessieres P."/>
            <person name="Bolotin A."/>
            <person name="Borchert S."/>
            <person name="Borriss R."/>
            <person name="Boursier L."/>
            <person name="Brans A."/>
            <person name="Braun M."/>
            <person name="Brignell S.C."/>
            <person name="Bron S."/>
            <person name="Brouillet S."/>
            <person name="Bruschi C.V."/>
            <person name="Caldwell B."/>
            <person name="Capuano V."/>
            <person name="Carter N.M."/>
            <person name="Choi S.-K."/>
            <person name="Codani J.-J."/>
            <person name="Connerton I.F."/>
            <person name="Cummings N.J."/>
            <person name="Daniel R.A."/>
            <person name="Denizot F."/>
            <person name="Devine K.M."/>
            <person name="Duesterhoeft A."/>
            <person name="Ehrlich S.D."/>
            <person name="Emmerson P.T."/>
            <person name="Entian K.-D."/>
            <person name="Errington J."/>
            <person name="Fabret C."/>
            <person name="Ferrari E."/>
            <person name="Foulger D."/>
            <person name="Fritz C."/>
            <person name="Fujita M."/>
            <person name="Fujita Y."/>
            <person name="Fuma S."/>
            <person name="Galizzi A."/>
            <person name="Galleron N."/>
            <person name="Ghim S.-Y."/>
            <person name="Glaser P."/>
            <person name="Goffeau A."/>
            <person name="Golightly E.J."/>
            <person name="Grandi G."/>
            <person name="Guiseppi G."/>
            <person name="Guy B.J."/>
            <person name="Haga K."/>
            <person name="Haiech J."/>
            <person name="Harwood C.R."/>
            <person name="Henaut A."/>
            <person name="Hilbert H."/>
            <person name="Holsappel S."/>
            <person name="Hosono S."/>
            <person name="Hullo M.-F."/>
            <person name="Itaya M."/>
            <person name="Jones L.-M."/>
            <person name="Joris B."/>
            <person name="Karamata D."/>
            <person name="Kasahara Y."/>
            <person name="Klaerr-Blanchard M."/>
            <person name="Klein C."/>
            <person name="Kobayashi Y."/>
            <person name="Koetter P."/>
            <person name="Koningstein G."/>
            <person name="Krogh S."/>
            <person name="Kumano M."/>
            <person name="Kurita K."/>
            <person name="Lapidus A."/>
            <person name="Lardinois S."/>
            <person name="Lauber J."/>
            <person name="Lazarevic V."/>
            <person name="Lee S.-M."/>
            <person name="Levine A."/>
            <person name="Liu H."/>
            <person name="Masuda S."/>
            <person name="Mauel C."/>
            <person name="Medigue C."/>
            <person name="Medina N."/>
            <person name="Mellado R.P."/>
            <person name="Mizuno M."/>
            <person name="Moestl D."/>
            <person name="Nakai S."/>
            <person name="Noback M."/>
            <person name="Noone D."/>
            <person name="O'Reilly M."/>
            <person name="Ogawa K."/>
            <person name="Ogiwara A."/>
            <person name="Oudega B."/>
            <person name="Park S.-H."/>
            <person name="Parro V."/>
            <person name="Pohl T.M."/>
            <person name="Portetelle D."/>
            <person name="Porwollik S."/>
            <person name="Prescott A.M."/>
            <person name="Presecan E."/>
            <person name="Pujic P."/>
            <person name="Purnelle B."/>
            <person name="Rapoport G."/>
            <person name="Rey M."/>
            <person name="Reynolds S."/>
            <person name="Rieger M."/>
            <person name="Rivolta C."/>
            <person name="Rocha E."/>
            <person name="Roche B."/>
            <person name="Rose M."/>
            <person name="Sadaie Y."/>
            <person name="Sato T."/>
            <person name="Scanlan E."/>
            <person name="Schleich S."/>
            <person name="Schroeter R."/>
            <person name="Scoffone F."/>
            <person name="Sekiguchi J."/>
            <person name="Sekowska A."/>
            <person name="Seror S.J."/>
            <person name="Serror P."/>
            <person name="Shin B.-S."/>
            <person name="Soldo B."/>
            <person name="Sorokin A."/>
            <person name="Tacconi E."/>
            <person name="Takagi T."/>
            <person name="Takahashi H."/>
            <person name="Takemaru K."/>
            <person name="Takeuchi M."/>
            <person name="Tamakoshi A."/>
            <person name="Tanaka T."/>
            <person name="Terpstra P."/>
            <person name="Tognoni A."/>
            <person name="Tosato V."/>
            <person name="Uchiyama S."/>
            <person name="Vandenbol M."/>
            <person name="Vannier F."/>
            <person name="Vassarotti A."/>
            <person name="Viari A."/>
            <person name="Wambutt R."/>
            <person name="Wedler E."/>
            <person name="Wedler H."/>
            <person name="Weitzenegger T."/>
            <person name="Winters P."/>
            <person name="Wipat A."/>
            <person name="Yamamoto H."/>
            <person name="Yamane K."/>
            <person name="Yasumoto K."/>
            <person name="Yata K."/>
            <person name="Yoshida K."/>
            <person name="Yoshikawa H.-F."/>
            <person name="Zumstein E."/>
            <person name="Yoshikawa H."/>
            <person name="Danchin A."/>
        </authorList>
    </citation>
    <scope>NUCLEOTIDE SEQUENCE [LARGE SCALE GENOMIC DNA]</scope>
    <source>
        <strain>168</strain>
    </source>
</reference>
<reference key="3">
    <citation type="journal article" date="1999" name="Genome Res.">
        <title>Detecting and analyzing DNA sequencing errors: toward a higher quality of the Bacillus subtilis genome sequence.</title>
        <authorList>
            <person name="Medigue C."/>
            <person name="Rose M."/>
            <person name="Viari A."/>
            <person name="Danchin A."/>
        </authorList>
    </citation>
    <scope>SEQUENCE REVISION</scope>
</reference>
<reference key="4">
    <citation type="journal article" date="1999" name="J. Bacteriol.">
        <title>Transcriptional control of Bacillus subtilis hemN and hemZ.</title>
        <authorList>
            <person name="Homuth G."/>
            <person name="Rompf A."/>
            <person name="Schumann W."/>
            <person name="Jahn D."/>
        </authorList>
    </citation>
    <scope>FUNCTION</scope>
    <scope>DISRUPTION PHENOTYPE</scope>
    <scope>INDUCTION</scope>
</reference>
<reference key="5">
    <citation type="thesis" date="1977" institute="University of Geneva" country="Switzerland">
        <authorList>
            <person name="Hauert J."/>
        </authorList>
    </citation>
    <scope>COFACTOR</scope>
    <scope>CAUTION</scope>
    <source>
        <strain>168</strain>
    </source>
</reference>
<dbReference type="EC" id="1.3.99.-"/>
<dbReference type="EMBL" id="Y14080">
    <property type="protein sequence ID" value="CAA74454.1"/>
    <property type="status" value="ALT_FRAME"/>
    <property type="molecule type" value="Genomic_DNA"/>
</dbReference>
<dbReference type="EMBL" id="Y14080">
    <property type="protein sequence ID" value="CAA74441.1"/>
    <property type="status" value="ALT_FRAME"/>
    <property type="molecule type" value="Genomic_DNA"/>
</dbReference>
<dbReference type="EMBL" id="AL009126">
    <property type="protein sequence ID" value="CAB12823.2"/>
    <property type="molecule type" value="Genomic_DNA"/>
</dbReference>
<dbReference type="PIR" id="A69820">
    <property type="entry name" value="A69820"/>
</dbReference>
<dbReference type="PIR" id="H69819">
    <property type="entry name" value="H69819"/>
</dbReference>
<dbReference type="RefSeq" id="NP_388865.1">
    <property type="nucleotide sequence ID" value="NC_000964.3"/>
</dbReference>
<dbReference type="RefSeq" id="WP_003245132.1">
    <property type="nucleotide sequence ID" value="NZ_OZ025638.1"/>
</dbReference>
<dbReference type="SMR" id="Q796V8"/>
<dbReference type="FunCoup" id="Q796V8">
    <property type="interactions" value="168"/>
</dbReference>
<dbReference type="STRING" id="224308.BSU09840"/>
<dbReference type="PaxDb" id="224308-BSU09840"/>
<dbReference type="DNASU" id="937935"/>
<dbReference type="EnsemblBacteria" id="CAB12823">
    <property type="protein sequence ID" value="CAB12823"/>
    <property type="gene ID" value="BSU_09840"/>
</dbReference>
<dbReference type="GeneID" id="937935"/>
<dbReference type="KEGG" id="bsu:BSU09840"/>
<dbReference type="PATRIC" id="fig|224308.179.peg.1056"/>
<dbReference type="eggNOG" id="COG0635">
    <property type="taxonomic scope" value="Bacteria"/>
</dbReference>
<dbReference type="InParanoid" id="Q796V8"/>
<dbReference type="OrthoDB" id="9808022at2"/>
<dbReference type="PhylomeDB" id="Q796V8"/>
<dbReference type="BioCyc" id="BSUB:BSU09840-MONOMER"/>
<dbReference type="UniPathway" id="UPA00251"/>
<dbReference type="Proteomes" id="UP000001570">
    <property type="component" value="Chromosome"/>
</dbReference>
<dbReference type="GO" id="GO:0005737">
    <property type="term" value="C:cytoplasm"/>
    <property type="evidence" value="ECO:0000318"/>
    <property type="project" value="GO_Central"/>
</dbReference>
<dbReference type="GO" id="GO:0051539">
    <property type="term" value="F:4 iron, 4 sulfur cluster binding"/>
    <property type="evidence" value="ECO:0000318"/>
    <property type="project" value="GO_Central"/>
</dbReference>
<dbReference type="GO" id="GO:0046872">
    <property type="term" value="F:metal ion binding"/>
    <property type="evidence" value="ECO:0007669"/>
    <property type="project" value="UniProtKB-KW"/>
</dbReference>
<dbReference type="GO" id="GO:0016491">
    <property type="term" value="F:oxidoreductase activity"/>
    <property type="evidence" value="ECO:0007669"/>
    <property type="project" value="UniProtKB-KW"/>
</dbReference>
<dbReference type="GO" id="GO:0006779">
    <property type="term" value="P:porphyrin-containing compound biosynthetic process"/>
    <property type="evidence" value="ECO:0000318"/>
    <property type="project" value="GO_Central"/>
</dbReference>
<dbReference type="GO" id="GO:0006782">
    <property type="term" value="P:protoporphyrinogen IX biosynthetic process"/>
    <property type="evidence" value="ECO:0007669"/>
    <property type="project" value="UniProtKB-UniPathway"/>
</dbReference>
<dbReference type="CDD" id="cd01335">
    <property type="entry name" value="Radical_SAM"/>
    <property type="match status" value="1"/>
</dbReference>
<dbReference type="Gene3D" id="3.80.30.20">
    <property type="entry name" value="tm_1862 like domain"/>
    <property type="match status" value="1"/>
</dbReference>
<dbReference type="InterPro" id="IPR034505">
    <property type="entry name" value="Coproporphyrinogen-III_oxidase"/>
</dbReference>
<dbReference type="InterPro" id="IPR006638">
    <property type="entry name" value="Elp3/MiaA/NifB-like_rSAM"/>
</dbReference>
<dbReference type="InterPro" id="IPR023995">
    <property type="entry name" value="HemZ"/>
</dbReference>
<dbReference type="InterPro" id="IPR007197">
    <property type="entry name" value="rSAM"/>
</dbReference>
<dbReference type="InterPro" id="IPR023404">
    <property type="entry name" value="rSAM_horseshoe"/>
</dbReference>
<dbReference type="NCBIfam" id="NF006061">
    <property type="entry name" value="PRK08207.1-4"/>
    <property type="match status" value="1"/>
</dbReference>
<dbReference type="NCBIfam" id="TIGR03994">
    <property type="entry name" value="rSAM_HemZ"/>
    <property type="match status" value="1"/>
</dbReference>
<dbReference type="PANTHER" id="PTHR13932">
    <property type="entry name" value="COPROPORPHYRINIGEN III OXIDASE"/>
    <property type="match status" value="1"/>
</dbReference>
<dbReference type="PANTHER" id="PTHR13932:SF1">
    <property type="entry name" value="OXYGEN-INDEPENDENT COPROPORPHYRINOGEN-III OXIDASE-LIKE PROTEIN HEMZ"/>
    <property type="match status" value="1"/>
</dbReference>
<dbReference type="Pfam" id="PF04055">
    <property type="entry name" value="Radical_SAM"/>
    <property type="match status" value="1"/>
</dbReference>
<dbReference type="SFLD" id="SFLDG01082">
    <property type="entry name" value="B12-binding_domain_containing"/>
    <property type="match status" value="1"/>
</dbReference>
<dbReference type="SFLD" id="SFLDF00310">
    <property type="entry name" value="oxygen-independent_coproporphy"/>
    <property type="match status" value="1"/>
</dbReference>
<dbReference type="SFLD" id="SFLDS00029">
    <property type="entry name" value="Radical_SAM"/>
    <property type="match status" value="1"/>
</dbReference>
<dbReference type="SMART" id="SM00729">
    <property type="entry name" value="Elp3"/>
    <property type="match status" value="1"/>
</dbReference>
<dbReference type="SUPFAM" id="SSF102114">
    <property type="entry name" value="Radical SAM enzymes"/>
    <property type="match status" value="1"/>
</dbReference>
<dbReference type="PROSITE" id="PS51918">
    <property type="entry name" value="RADICAL_SAM"/>
    <property type="match status" value="1"/>
</dbReference>
<accession>Q796V8</accession>
<accession>O07537</accession>
<accession>O07538</accession>
<protein>
    <recommendedName>
        <fullName>Oxygen-independent coproporphyrinogen-III oxidase-like protein HemZ</fullName>
        <ecNumber>1.3.99.-</ecNumber>
    </recommendedName>
</protein>
<proteinExistence type="evidence at transcript level"/>
<organism>
    <name type="scientific">Bacillus subtilis (strain 168)</name>
    <dbReference type="NCBI Taxonomy" id="224308"/>
    <lineage>
        <taxon>Bacteria</taxon>
        <taxon>Bacillati</taxon>
        <taxon>Bacillota</taxon>
        <taxon>Bacilli</taxon>
        <taxon>Bacillales</taxon>
        <taxon>Bacillaceae</taxon>
        <taxon>Bacillus</taxon>
    </lineage>
</organism>
<evidence type="ECO:0000250" key="1"/>
<evidence type="ECO:0000255" key="2">
    <source>
        <dbReference type="PROSITE-ProRule" id="PRU01266"/>
    </source>
</evidence>
<evidence type="ECO:0000269" key="3">
    <source>
    </source>
</evidence>
<evidence type="ECO:0000269" key="4">
    <source ref="5"/>
</evidence>
<evidence type="ECO:0000305" key="5"/>
<evidence type="ECO:0000305" key="6">
    <source>
    </source>
</evidence>
<name>HEMZ_BACSU</name>
<sequence>MQIKIEGIHDDRLHRPLQNIANLFYEECELAYGGEEPADFVISLALSQTDEHVTVSGEVKGTGIKEQHTKFFSPDMTEKEAFKQVKNTISYVYLNLLQAHTGITQKWGILTGIRPTKLLHKKLQSGMSKEQAHAELKKDYLIHDEKIMLMQEIVDRQLAAVPDLYRVKDEVSIYIGIPFCPTKCAYCTFPAYAIQGQAGRVGSFLWGLHYEMQKIGEWLKEHDVKVTTIYFGGGTPTSITAEEMDLLYEEMVRSFPDVKNIREITVEAGRPDTITEEKLAVLNKYDIDRISINPQSYENETLKAIGRHHTVEETIEKYHLSRQHGMNNINMDLIIGLPGEGVKEFRHSLSETEKLMPESLTVHTLSFKRASEMTRNKHKYKVAGREEVSQMMEDAVAWTKEHGYVPYYLYRQKNILGNLENVGYSLPGQESIYNIMIMEEVQTIIGIGCGAASKFIDRDTGKITHFANPKDPKSYNERFEHYTDEKIKYLEQIFEKTTKQH</sequence>
<keyword id="KW-0004">4Fe-4S</keyword>
<keyword id="KW-0408">Iron</keyword>
<keyword id="KW-0411">Iron-sulfur</keyword>
<keyword id="KW-0479">Metal-binding</keyword>
<keyword id="KW-0560">Oxidoreductase</keyword>
<keyword id="KW-0627">Porphyrin biosynthesis</keyword>
<keyword id="KW-1185">Reference proteome</keyword>
<keyword id="KW-0949">S-adenosyl-L-methionine</keyword>
<gene>
    <name type="primary">hemZ</name>
    <name type="synonym">yhaV</name>
    <name type="synonym">yhaW</name>
    <name type="ordered locus">BSU09840</name>
</gene>